<evidence type="ECO:0000250" key="1"/>
<evidence type="ECO:0000255" key="2"/>
<evidence type="ECO:0000269" key="3">
    <source>
    </source>
</evidence>
<evidence type="ECO:0000269" key="4">
    <source>
    </source>
</evidence>
<evidence type="ECO:0000269" key="5">
    <source>
    </source>
</evidence>
<evidence type="ECO:0000269" key="6">
    <source>
    </source>
</evidence>
<evidence type="ECO:0000305" key="7"/>
<dbReference type="EC" id="3.4.21.105"/>
<dbReference type="EMBL" id="L28755">
    <property type="protein sequence ID" value="AAA61597.1"/>
    <property type="molecule type" value="Genomic_DNA"/>
</dbReference>
<dbReference type="PIR" id="A55862">
    <property type="entry name" value="A55862"/>
</dbReference>
<dbReference type="RefSeq" id="WP_004917931.1">
    <property type="nucleotide sequence ID" value="NZ_AP022374.1"/>
</dbReference>
<dbReference type="SMR" id="P46116"/>
<dbReference type="DIP" id="DIP-60798N"/>
<dbReference type="IntAct" id="P46116">
    <property type="interactions" value="2"/>
</dbReference>
<dbReference type="MINT" id="P46116"/>
<dbReference type="STRING" id="588.BGK56_18970"/>
<dbReference type="BindingDB" id="P46116"/>
<dbReference type="MEROPS" id="S54.004"/>
<dbReference type="GeneID" id="93520134"/>
<dbReference type="KEGG" id="psx:DR96_2293"/>
<dbReference type="OMA" id="TWKSFIM"/>
<dbReference type="BRENDA" id="3.4.21.105">
    <property type="organism ID" value="5058"/>
</dbReference>
<dbReference type="GO" id="GO:0005886">
    <property type="term" value="C:plasma membrane"/>
    <property type="evidence" value="ECO:0007669"/>
    <property type="project" value="UniProtKB-SubCell"/>
</dbReference>
<dbReference type="GO" id="GO:0004252">
    <property type="term" value="F:serine-type endopeptidase activity"/>
    <property type="evidence" value="ECO:0007669"/>
    <property type="project" value="InterPro"/>
</dbReference>
<dbReference type="GO" id="GO:0008236">
    <property type="term" value="F:serine-type peptidase activity"/>
    <property type="evidence" value="ECO:0000315"/>
    <property type="project" value="UniProtKB"/>
</dbReference>
<dbReference type="GO" id="GO:0006508">
    <property type="term" value="P:proteolysis"/>
    <property type="evidence" value="ECO:0007669"/>
    <property type="project" value="UniProtKB-KW"/>
</dbReference>
<dbReference type="Gene3D" id="1.20.1540.10">
    <property type="entry name" value="Rhomboid-like"/>
    <property type="match status" value="1"/>
</dbReference>
<dbReference type="InterPro" id="IPR022764">
    <property type="entry name" value="Peptidase_S54_rhomboid_dom"/>
</dbReference>
<dbReference type="InterPro" id="IPR035952">
    <property type="entry name" value="Rhomboid-like_sf"/>
</dbReference>
<dbReference type="InterPro" id="IPR050925">
    <property type="entry name" value="Rhomboid_protease_S54"/>
</dbReference>
<dbReference type="PANTHER" id="PTHR43731:SF14">
    <property type="entry name" value="PRESENILIN-ASSOCIATED RHOMBOID-LIKE PROTEIN, MITOCHONDRIAL"/>
    <property type="match status" value="1"/>
</dbReference>
<dbReference type="PANTHER" id="PTHR43731">
    <property type="entry name" value="RHOMBOID PROTEASE"/>
    <property type="match status" value="1"/>
</dbReference>
<dbReference type="Pfam" id="PF01694">
    <property type="entry name" value="Rhomboid"/>
    <property type="match status" value="1"/>
</dbReference>
<dbReference type="SUPFAM" id="SSF144091">
    <property type="entry name" value="Rhomboid-like"/>
    <property type="match status" value="1"/>
</dbReference>
<feature type="chain" id="PRO_0000064416" description="Rhomboid protease AarA">
    <location>
        <begin position="1"/>
        <end position="281"/>
    </location>
</feature>
<feature type="transmembrane region" description="Helical" evidence="2">
    <location>
        <begin position="16"/>
        <end position="36"/>
    </location>
</feature>
<feature type="transmembrane region" description="Helical" evidence="2">
    <location>
        <begin position="76"/>
        <end position="96"/>
    </location>
</feature>
<feature type="transmembrane region" description="Helical" evidence="2">
    <location>
        <begin position="105"/>
        <end position="125"/>
    </location>
</feature>
<feature type="transmembrane region" description="Helical" evidence="2">
    <location>
        <begin position="145"/>
        <end position="165"/>
    </location>
</feature>
<feature type="transmembrane region" description="Helical" evidence="2">
    <location>
        <begin position="185"/>
        <end position="205"/>
    </location>
</feature>
<feature type="transmembrane region" description="Helical" evidence="2">
    <location>
        <begin position="208"/>
        <end position="228"/>
    </location>
</feature>
<feature type="transmembrane region" description="Helical" evidence="2">
    <location>
        <begin position="233"/>
        <end position="253"/>
    </location>
</feature>
<feature type="active site" description="Nucleophile" evidence="7">
    <location>
        <position position="150"/>
    </location>
</feature>
<feature type="active site" description="Charge relay system" evidence="1">
    <location>
        <position position="210"/>
    </location>
</feature>
<feature type="mutagenesis site" description="Loss of proteolytic activity." evidence="5">
    <original>A</original>
    <variation>P</variation>
    <location>
        <position position="149"/>
    </location>
</feature>
<feature type="mutagenesis site" description="Loss of proteolytic activity." evidence="4 5">
    <original>S</original>
    <variation>A</variation>
    <location>
        <position position="150"/>
    </location>
</feature>
<comment type="function">
    <text evidence="3 4 6">Rhomboid serine protease that catalyzes intramembrane proteolysis. Mediates quorum-sensing and the subsequent regulation of target genes via activation of the Tat protein export system. Catalyzes the proteolytic activation of TatA by removal of its N-terminal extension.</text>
</comment>
<comment type="catalytic activity">
    <reaction evidence="5">
        <text>Cleaves type-1 transmembrane domains using a catalytic dyad composed of serine and histidine that are contributed by different transmembrane domains.</text>
        <dbReference type="EC" id="3.4.21.105"/>
    </reaction>
</comment>
<comment type="interaction">
    <interactant intactId="EBI-10098058">
        <id>P46116</id>
    </interactant>
    <interactant intactId="EBI-10098044">
        <id>A1YH68</id>
        <label>tatA</label>
    </interactant>
    <organismsDiffer>false</organismsDiffer>
    <experiments>3</experiments>
</comment>
<comment type="subcellular location">
    <subcellularLocation>
        <location evidence="3 4">Cell membrane</location>
        <topology evidence="3 4">Multi-pass membrane protein</topology>
    </subcellularLocation>
</comment>
<comment type="miscellaneous">
    <text>AarA deletion mutations display alterations in cell morphology and total or partial loss of yellow pigmentation.</text>
</comment>
<comment type="similarity">
    <text evidence="7">Belongs to the peptidase S54 family.</text>
</comment>
<keyword id="KW-1003">Cell membrane</keyword>
<keyword id="KW-0378">Hydrolase</keyword>
<keyword id="KW-0472">Membrane</keyword>
<keyword id="KW-0645">Protease</keyword>
<keyword id="KW-0720">Serine protease</keyword>
<keyword id="KW-0812">Transmembrane</keyword>
<keyword id="KW-1133">Transmembrane helix</keyword>
<gene>
    <name type="primary">aarA</name>
</gene>
<protein>
    <recommendedName>
        <fullName>Rhomboid protease AarA</fullName>
        <ecNumber>3.4.21.105</ecNumber>
    </recommendedName>
    <alternativeName>
        <fullName>Intramembrane serine protease</fullName>
    </alternativeName>
</protein>
<sequence length="281" mass="31106">MAEQQNPFSIKSKARFSLGAIALTLTLVLLNIAVYFYQIVFASPLDSRESNLILFGANIYQLSLTGDWWRYPISMMLHSNGTHLAFNCLALFVIGIGCERAYGKFKLLAIYIISGIGAALFSAYWQYYEISNSDLWTDSTVYITIGVGASGAIMGIAAASVIYLIKVVINKPNPHPVIQRRQKYQLYNLIAMIALTLINGLQSGVDNAAHIGGAIIGALISIAYILVPHKLRVANLCITVIAASLLTMMIYLYSFSTNKHLLEEREFIYQEVYTELADANQ</sequence>
<reference key="1">
    <citation type="journal article" date="1994" name="J. Bacteriol.">
        <title>Characterization of aarA, a pleiotrophic negative regulator of the 2'-N-acetyltransferase in Providencia stuartii.</title>
        <authorList>
            <person name="Rather P.N."/>
            <person name="Orosz E."/>
        </authorList>
    </citation>
    <scope>NUCLEOTIDE SEQUENCE [GENOMIC DNA]</scope>
    <scope>FUNCTION</scope>
    <source>
        <strain>PR50</strain>
    </source>
</reference>
<reference key="2">
    <citation type="journal article" date="2005" name="EMBO J.">
        <title>Mechanism of intramembrane proteolysis investigated with purified rhomboid proteases.</title>
        <authorList>
            <person name="Lemberg M.K."/>
            <person name="Menendez J."/>
            <person name="Misik A."/>
            <person name="Garcia M."/>
            <person name="Koth C.M."/>
            <person name="Freeman M."/>
        </authorList>
    </citation>
    <scope>FUNCTION</scope>
    <scope>SUBCELLULAR LOCATION</scope>
</reference>
<reference key="3">
    <citation type="journal article" date="2007" name="Proc. Natl. Acad. Sci. U.S.A.">
        <title>Rhomboid protease AarA mediates quorum-sensing in Providencia stuartii by activating TatA of the twin-arginine translocase.</title>
        <authorList>
            <person name="Stevenson L.G."/>
            <person name="Strisovsky K."/>
            <person name="Clemmer K.M."/>
            <person name="Bhatt S."/>
            <person name="Freeman M."/>
            <person name="Rather P.N."/>
        </authorList>
    </citation>
    <scope>FUNCTION</scope>
    <scope>SUBCELLULAR LOCATION</scope>
    <scope>MUTAGENESIS OF SER-150</scope>
</reference>
<reference key="4">
    <citation type="journal article" date="2011" name="Cell">
        <title>Rhomboid family pseudoproteases use the ER quality control machinery to regulate intercellular signaling.</title>
        <authorList>
            <person name="Zettl M."/>
            <person name="Adrain C."/>
            <person name="Strisovsky K."/>
            <person name="Lastun V."/>
            <person name="Freeman M."/>
        </authorList>
    </citation>
    <scope>CATALYTIC ACTIVITY</scope>
    <scope>MUTAGENESIS OF ALA-149 AND SER-150</scope>
</reference>
<organism>
    <name type="scientific">Providencia stuartii</name>
    <dbReference type="NCBI Taxonomy" id="588"/>
    <lineage>
        <taxon>Bacteria</taxon>
        <taxon>Pseudomonadati</taxon>
        <taxon>Pseudomonadota</taxon>
        <taxon>Gammaproteobacteria</taxon>
        <taxon>Enterobacterales</taxon>
        <taxon>Morganellaceae</taxon>
        <taxon>Providencia</taxon>
    </lineage>
</organism>
<proteinExistence type="evidence at protein level"/>
<accession>P46116</accession>
<name>AARA_PROST</name>